<gene>
    <name evidence="1" type="primary">ycf4</name>
    <name type="ordered locus">LopeCp050</name>
</gene>
<keyword id="KW-0150">Chloroplast</keyword>
<keyword id="KW-0472">Membrane</keyword>
<keyword id="KW-0602">Photosynthesis</keyword>
<keyword id="KW-0934">Plastid</keyword>
<keyword id="KW-0793">Thylakoid</keyword>
<keyword id="KW-0812">Transmembrane</keyword>
<keyword id="KW-1133">Transmembrane helix</keyword>
<comment type="function">
    <text evidence="1">Seems to be required for the assembly of the photosystem I complex.</text>
</comment>
<comment type="subcellular location">
    <subcellularLocation>
        <location evidence="1">Plastid</location>
        <location evidence="1">Chloroplast thylakoid membrane</location>
        <topology evidence="1">Multi-pass membrane protein</topology>
    </subcellularLocation>
</comment>
<comment type="similarity">
    <text evidence="1">Belongs to the Ycf4 family.</text>
</comment>
<evidence type="ECO:0000255" key="1">
    <source>
        <dbReference type="HAMAP-Rule" id="MF_00437"/>
    </source>
</evidence>
<organism>
    <name type="scientific">Lolium perenne</name>
    <name type="common">Perennial ryegrass</name>
    <dbReference type="NCBI Taxonomy" id="4522"/>
    <lineage>
        <taxon>Eukaryota</taxon>
        <taxon>Viridiplantae</taxon>
        <taxon>Streptophyta</taxon>
        <taxon>Embryophyta</taxon>
        <taxon>Tracheophyta</taxon>
        <taxon>Spermatophyta</taxon>
        <taxon>Magnoliopsida</taxon>
        <taxon>Liliopsida</taxon>
        <taxon>Poales</taxon>
        <taxon>Poaceae</taxon>
        <taxon>BOP clade</taxon>
        <taxon>Pooideae</taxon>
        <taxon>Poodae</taxon>
        <taxon>Poeae</taxon>
        <taxon>Poeae Chloroplast Group 2 (Poeae type)</taxon>
        <taxon>Loliodinae</taxon>
        <taxon>Loliinae</taxon>
        <taxon>Lolium</taxon>
    </lineage>
</organism>
<protein>
    <recommendedName>
        <fullName evidence="1">Photosystem I assembly protein Ycf4</fullName>
    </recommendedName>
</protein>
<feature type="chain" id="PRO_0000326017" description="Photosystem I assembly protein Ycf4">
    <location>
        <begin position="1"/>
        <end position="185"/>
    </location>
</feature>
<feature type="transmembrane region" description="Helical" evidence="1">
    <location>
        <begin position="20"/>
        <end position="40"/>
    </location>
</feature>
<feature type="transmembrane region" description="Helical" evidence="1">
    <location>
        <begin position="57"/>
        <end position="77"/>
    </location>
</feature>
<reference key="1">
    <citation type="journal article" date="2008" name="PLoS ONE">
        <title>An optimized chloroplast DNA extraction protocol for grasses (Poaceae) proves suitable for whole plastid genome sequencing and SNP detection.</title>
        <authorList>
            <person name="Diekmann K."/>
            <person name="Hodkinson T.R."/>
            <person name="Fricke E."/>
            <person name="Barth S."/>
        </authorList>
    </citation>
    <scope>NUCLEOTIDE SEQUENCE [LARGE SCALE GENOMIC DNA]</scope>
    <source>
        <strain>cv. Cashel</strain>
    </source>
</reference>
<name>YCF4_LOLPR</name>
<proteinExistence type="inferred from homology"/>
<accession>A8Y9I0</accession>
<dbReference type="EMBL" id="AM777385">
    <property type="protein sequence ID" value="CAO85986.1"/>
    <property type="molecule type" value="Genomic_DNA"/>
</dbReference>
<dbReference type="RefSeq" id="YP_001531293.1">
    <property type="nucleotide sequence ID" value="NC_009950.1"/>
</dbReference>
<dbReference type="GeneID" id="5696627"/>
<dbReference type="KEGG" id="lper:5696627"/>
<dbReference type="GO" id="GO:0009535">
    <property type="term" value="C:chloroplast thylakoid membrane"/>
    <property type="evidence" value="ECO:0007669"/>
    <property type="project" value="UniProtKB-SubCell"/>
</dbReference>
<dbReference type="GO" id="GO:0009522">
    <property type="term" value="C:photosystem I"/>
    <property type="evidence" value="ECO:0007669"/>
    <property type="project" value="InterPro"/>
</dbReference>
<dbReference type="GO" id="GO:0015979">
    <property type="term" value="P:photosynthesis"/>
    <property type="evidence" value="ECO:0007669"/>
    <property type="project" value="UniProtKB-UniRule"/>
</dbReference>
<dbReference type="HAMAP" id="MF_00437">
    <property type="entry name" value="Ycf4"/>
    <property type="match status" value="1"/>
</dbReference>
<dbReference type="InterPro" id="IPR003359">
    <property type="entry name" value="PSI_Ycf4_assembly"/>
</dbReference>
<dbReference type="PANTHER" id="PTHR33288">
    <property type="match status" value="1"/>
</dbReference>
<dbReference type="PANTHER" id="PTHR33288:SF4">
    <property type="entry name" value="PHOTOSYSTEM I ASSEMBLY PROTEIN YCF4"/>
    <property type="match status" value="1"/>
</dbReference>
<dbReference type="Pfam" id="PF02392">
    <property type="entry name" value="Ycf4"/>
    <property type="match status" value="1"/>
</dbReference>
<geneLocation type="chloroplast"/>
<sequence>MNWRSEHVWVELLKGSRKRGNFFWACILFLGSLGFLSVGASSYLGKNIISILPSQQILFFPQGVVMSFYGIAGLFISSYLWCTILWNVGSGYDRFDRKEGIVCIFRWGFPGIKRRVFLQFLMRDIQSIRIQVKEGLSPRRILYMEIRGQGVIPLTRTDEKFFTPREMEQKAAELAYFLRVPIEVF</sequence>